<evidence type="ECO:0000250" key="1"/>
<evidence type="ECO:0000250" key="2">
    <source>
        <dbReference type="UniProtKB" id="P00338"/>
    </source>
</evidence>
<evidence type="ECO:0000250" key="3">
    <source>
        <dbReference type="UniProtKB" id="P04642"/>
    </source>
</evidence>
<evidence type="ECO:0000269" key="4">
    <source>
    </source>
</evidence>
<evidence type="ECO:0000305" key="5"/>
<evidence type="ECO:0007744" key="6">
    <source>
    </source>
</evidence>
<evidence type="ECO:0007744" key="7">
    <source>
    </source>
</evidence>
<protein>
    <recommendedName>
        <fullName>L-lactate dehydrogenase A chain</fullName>
        <shortName>LDH-A</shortName>
        <ecNumber evidence="2">1.1.1.27</ecNumber>
    </recommendedName>
    <alternativeName>
        <fullName>LDH muscle subunit</fullName>
        <shortName>LDH-M</shortName>
    </alternativeName>
</protein>
<organism>
    <name type="scientific">Mus musculus</name>
    <name type="common">Mouse</name>
    <dbReference type="NCBI Taxonomy" id="10090"/>
    <lineage>
        <taxon>Eukaryota</taxon>
        <taxon>Metazoa</taxon>
        <taxon>Chordata</taxon>
        <taxon>Craniata</taxon>
        <taxon>Vertebrata</taxon>
        <taxon>Euteleostomi</taxon>
        <taxon>Mammalia</taxon>
        <taxon>Eutheria</taxon>
        <taxon>Euarchontoglires</taxon>
        <taxon>Glires</taxon>
        <taxon>Rodentia</taxon>
        <taxon>Myomorpha</taxon>
        <taxon>Muroidea</taxon>
        <taxon>Muridae</taxon>
        <taxon>Murinae</taxon>
        <taxon>Mus</taxon>
        <taxon>Mus</taxon>
    </lineage>
</organism>
<comment type="function">
    <text evidence="2">Interconverts simultaneously and stereospecifically pyruvate and lactate with concomitant interconversion of NADH and NAD(+).</text>
</comment>
<comment type="catalytic activity">
    <reaction evidence="2">
        <text>(S)-lactate + NAD(+) = pyruvate + NADH + H(+)</text>
        <dbReference type="Rhea" id="RHEA:23444"/>
        <dbReference type="ChEBI" id="CHEBI:15361"/>
        <dbReference type="ChEBI" id="CHEBI:15378"/>
        <dbReference type="ChEBI" id="CHEBI:16651"/>
        <dbReference type="ChEBI" id="CHEBI:57540"/>
        <dbReference type="ChEBI" id="CHEBI:57945"/>
        <dbReference type="EC" id="1.1.1.27"/>
    </reaction>
    <physiologicalReaction direction="left-to-right" evidence="2">
        <dbReference type="Rhea" id="RHEA:23445"/>
    </physiologicalReaction>
    <physiologicalReaction direction="right-to-left" evidence="2">
        <dbReference type="Rhea" id="RHEA:23446"/>
    </physiologicalReaction>
</comment>
<comment type="pathway">
    <text evidence="2">Fermentation; pyruvate fermentation to lactate; (S)-lactate from pyruvate: step 1/1.</text>
</comment>
<comment type="subunit">
    <text evidence="2">Homotetramer. Interacts with PTEN upstream reading frame protein MP31.</text>
</comment>
<comment type="interaction">
    <interactant intactId="EBI-444940">
        <id>P06151</id>
    </interactant>
    <interactant intactId="EBI-299932">
        <id>Q60668</id>
        <label>Hnrnpd</label>
    </interactant>
    <organismsDiffer>false</organismsDiffer>
    <experiments>2</experiments>
</comment>
<comment type="subcellular location">
    <subcellularLocation>
        <location>Cytoplasm</location>
    </subcellularLocation>
</comment>
<comment type="PTM">
    <text evidence="4">ISGylated.</text>
</comment>
<comment type="similarity">
    <text evidence="5">Belongs to the LDH/MDH superfamily. LDH family.</text>
</comment>
<keyword id="KW-0007">Acetylation</keyword>
<keyword id="KW-0963">Cytoplasm</keyword>
<keyword id="KW-0903">Direct protein sequencing</keyword>
<keyword id="KW-1017">Isopeptide bond</keyword>
<keyword id="KW-0520">NAD</keyword>
<keyword id="KW-0560">Oxidoreductase</keyword>
<keyword id="KW-0597">Phosphoprotein</keyword>
<keyword id="KW-1185">Reference proteome</keyword>
<keyword id="KW-0832">Ubl conjugation</keyword>
<gene>
    <name type="primary">Ldha</name>
    <name type="synonym">Ldh-1</name>
    <name type="synonym">Ldh1</name>
</gene>
<accession>P06151</accession>
<name>LDHA_MOUSE</name>
<reference key="1">
    <citation type="journal article" date="1987" name="Genetics">
        <title>Complete nucleotide sequence of the mouse lactate dehydrogenase-A functional gene: comparison of the exon-intron organization of dehydrogenase genes.</title>
        <authorList>
            <person name="Fukasawa K.M."/>
            <person name="Li S.S.-L."/>
        </authorList>
    </citation>
    <scope>NUCLEOTIDE SEQUENCE [GENOMIC DNA]</scope>
    <source>
        <strain>C57BL/10</strain>
        <tissue>Liver</tissue>
    </source>
</reference>
<reference key="2">
    <citation type="journal article" date="1985" name="Eur. J. Biochem.">
        <title>Protein structure and gene organization of mouse lactate dehydrogenase-A isozyme.</title>
        <authorList>
            <person name="Li S.S.-L."/>
            <person name="Tiano H.F."/>
            <person name="Fukasawa K.M."/>
            <person name="Yagi K."/>
            <person name="Shimizu M."/>
            <person name="Sharief F.S."/>
            <person name="Nakashima Y."/>
            <person name="Pan Y.E."/>
        </authorList>
    </citation>
    <scope>NUCLEOTIDE SEQUENCE [GENOMIC DNA]</scope>
</reference>
<reference key="3">
    <citation type="journal article" date="1990" name="J. Genet. Mol. Biol.">
        <title>Lactate dehydrogenase-A mRNAs in mouse testis and somatic tissues containing different 5' noncoding sequences.</title>
        <authorList>
            <person name="Hiraoka Y."/>
            <person name="Li S.S.-L."/>
        </authorList>
    </citation>
    <scope>NUCLEOTIDE SEQUENCE [MRNA]</scope>
    <source>
        <strain>DBA/2J</strain>
    </source>
</reference>
<reference key="4">
    <citation type="journal article" date="1986" name="Biochem. J.">
        <title>Nucleotide sequence of the putative regulatory region of mouse lactate dehydrogenase-A gene.</title>
        <authorList>
            <person name="Fukasawa K.M."/>
            <person name="Li S.S.-L."/>
        </authorList>
    </citation>
    <scope>NUCLEOTIDE SEQUENCE [GENOMIC DNA] OF 1-42</scope>
</reference>
<reference key="5">
    <citation type="submission" date="2009-01" db="UniProtKB">
        <authorList>
            <person name="Lubec G."/>
            <person name="Kang S.U."/>
            <person name="Klug S."/>
            <person name="Yang J.W."/>
            <person name="Zigmond M."/>
            <person name="Sunyer B."/>
            <person name="Chen W.-Q."/>
        </authorList>
    </citation>
    <scope>PROTEIN SEQUENCE OF 6-14; 23-73; 82-99; 107-126; 133-149; 158-169; 172-177; 213-228; 233-243; 246-265; 269-315 AND 319-328</scope>
    <scope>IDENTIFICATION BY MASS SPECTROMETRY</scope>
    <source>
        <strain>C57BL/6J</strain>
        <strain>OF1</strain>
        <tissue>Brain</tissue>
        <tissue>Hippocampus</tissue>
    </source>
</reference>
<reference key="6">
    <citation type="journal article" date="1985" name="Int. J. Biochem.">
        <title>Isolation and characterization of a cDNA and a pseudogene for mouse lactate dehydrogenase-A isozyme.</title>
        <authorList>
            <person name="Akai K."/>
            <person name="Yagi K."/>
            <person name="Tiano H.F."/>
            <person name="Pan Y.-C.E."/>
            <person name="Shimizu M."/>
            <person name="Fong K."/>
            <person name="Jungmann R.A."/>
            <person name="Li S.S.-L."/>
        </authorList>
    </citation>
    <scope>NUCLEOTIDE SEQUENCE [MRNA] OF 202-332</scope>
</reference>
<reference key="7">
    <citation type="journal article" date="2005" name="Biochem. Biophys. Res. Commun.">
        <title>Proteomic identification of proteins conjugated to ISG15 in mouse and human cells.</title>
        <authorList>
            <person name="Giannakopoulos N.V."/>
            <person name="Luo J.K."/>
            <person name="Papov V."/>
            <person name="Zou W."/>
            <person name="Lenschow D.J."/>
            <person name="Jacobs B.S."/>
            <person name="Borden E.C."/>
            <person name="Li J."/>
            <person name="Virgin H.W."/>
            <person name="Zhang D.E."/>
        </authorList>
    </citation>
    <scope>ISGYLATION</scope>
</reference>
<reference key="8">
    <citation type="journal article" date="2007" name="J. Immunol.">
        <title>Quantitative time-resolved phosphoproteomic analysis of mast cell signaling.</title>
        <authorList>
            <person name="Cao L."/>
            <person name="Yu K."/>
            <person name="Banh C."/>
            <person name="Nguyen V."/>
            <person name="Ritz A."/>
            <person name="Raphael B.J."/>
            <person name="Kawakami Y."/>
            <person name="Kawakami T."/>
            <person name="Salomon A.R."/>
        </authorList>
    </citation>
    <scope>PHOSPHORYLATION [LARGE SCALE ANALYSIS] AT TYR-239</scope>
    <scope>IDENTIFICATION BY MASS SPECTROMETRY [LARGE SCALE ANALYSIS]</scope>
    <source>
        <tissue>Mast cell</tissue>
    </source>
</reference>
<reference key="9">
    <citation type="journal article" date="2010" name="Cell">
        <title>A tissue-specific atlas of mouse protein phosphorylation and expression.</title>
        <authorList>
            <person name="Huttlin E.L."/>
            <person name="Jedrychowski M.P."/>
            <person name="Elias J.E."/>
            <person name="Goswami T."/>
            <person name="Rad R."/>
            <person name="Beausoleil S.A."/>
            <person name="Villen J."/>
            <person name="Haas W."/>
            <person name="Sowa M.E."/>
            <person name="Gygi S.P."/>
        </authorList>
    </citation>
    <scope>IDENTIFICATION BY MASS SPECTROMETRY [LARGE SCALE ANALYSIS]</scope>
    <source>
        <tissue>Brain</tissue>
        <tissue>Brown adipose tissue</tissue>
        <tissue>Heart</tissue>
        <tissue>Kidney</tissue>
        <tissue>Liver</tissue>
        <tissue>Lung</tissue>
        <tissue>Pancreas</tissue>
        <tissue>Spleen</tissue>
        <tissue>Testis</tissue>
    </source>
</reference>
<reference key="10">
    <citation type="journal article" date="2013" name="Mol. Cell">
        <title>SIRT5-mediated lysine desuccinylation impacts diverse metabolic pathways.</title>
        <authorList>
            <person name="Park J."/>
            <person name="Chen Y."/>
            <person name="Tishkoff D.X."/>
            <person name="Peng C."/>
            <person name="Tan M."/>
            <person name="Dai L."/>
            <person name="Xie Z."/>
            <person name="Zhang Y."/>
            <person name="Zwaans B.M."/>
            <person name="Skinner M.E."/>
            <person name="Lombard D.B."/>
            <person name="Zhao Y."/>
        </authorList>
    </citation>
    <scope>ACETYLATION [LARGE SCALE ANALYSIS] AT ALA-2; LYS-5; LYS-81; LYS-118; LYS-126; LYS-224; LYS-232; LYS-243 AND LYS-318</scope>
    <scope>SUCCINYLATION [LARGE SCALE ANALYSIS] AT LYS-5; LYS-118 AND LYS-318</scope>
    <scope>CLEAVAGE OF INITIATOR METHIONINE [LARGE SCALE ANALYSIS]</scope>
    <scope>IDENTIFICATION BY MASS SPECTROMETRY [LARGE SCALE ANALYSIS]</scope>
    <source>
        <tissue>Embryonic fibroblast</tissue>
        <tissue>Liver</tissue>
    </source>
</reference>
<dbReference type="EC" id="1.1.1.27" evidence="2"/>
<dbReference type="EMBL" id="Y00309">
    <property type="protein sequence ID" value="CAA68410.1"/>
    <property type="molecule type" value="Genomic_DNA"/>
</dbReference>
<dbReference type="EMBL" id="X02520">
    <property type="protein sequence ID" value="CAA26360.1"/>
    <property type="molecule type" value="Genomic_DNA"/>
</dbReference>
<dbReference type="EMBL" id="X02521">
    <property type="protein sequence ID" value="CAA26360.1"/>
    <property type="status" value="JOINED"/>
    <property type="molecule type" value="Genomic_DNA"/>
</dbReference>
<dbReference type="EMBL" id="X02522">
    <property type="protein sequence ID" value="CAA26360.1"/>
    <property type="status" value="JOINED"/>
    <property type="molecule type" value="Genomic_DNA"/>
</dbReference>
<dbReference type="EMBL" id="X02523">
    <property type="protein sequence ID" value="CAA26360.1"/>
    <property type="status" value="JOINED"/>
    <property type="molecule type" value="Genomic_DNA"/>
</dbReference>
<dbReference type="EMBL" id="X02524">
    <property type="protein sequence ID" value="CAA26360.1"/>
    <property type="status" value="JOINED"/>
    <property type="molecule type" value="Genomic_DNA"/>
</dbReference>
<dbReference type="EMBL" id="X02525">
    <property type="protein sequence ID" value="CAA26360.1"/>
    <property type="status" value="JOINED"/>
    <property type="molecule type" value="Genomic_DNA"/>
</dbReference>
<dbReference type="EMBL" id="X02526">
    <property type="protein sequence ID" value="CAA26360.1"/>
    <property type="status" value="JOINED"/>
    <property type="molecule type" value="Genomic_DNA"/>
</dbReference>
<dbReference type="EMBL" id="U13687">
    <property type="protein sequence ID" value="AAA21466.1"/>
    <property type="molecule type" value="mRNA"/>
</dbReference>
<dbReference type="EMBL" id="X03753">
    <property type="protein sequence ID" value="CAA27387.1"/>
    <property type="molecule type" value="Genomic_DNA"/>
</dbReference>
<dbReference type="EMBL" id="M17516">
    <property type="protein sequence ID" value="AAA39424.1"/>
    <property type="molecule type" value="mRNA"/>
</dbReference>
<dbReference type="CCDS" id="CCDS21289.1"/>
<dbReference type="PIR" id="A25205">
    <property type="entry name" value="DEMSLM"/>
</dbReference>
<dbReference type="PIR" id="I48240">
    <property type="entry name" value="I48240"/>
</dbReference>
<dbReference type="RefSeq" id="NP_034829.1">
    <property type="nucleotide sequence ID" value="NM_010699.2"/>
</dbReference>
<dbReference type="RefSeq" id="XP_030098036.1">
    <property type="nucleotide sequence ID" value="XM_030242176.1"/>
</dbReference>
<dbReference type="SMR" id="P06151"/>
<dbReference type="BioGRID" id="201127">
    <property type="interactions" value="28"/>
</dbReference>
<dbReference type="FunCoup" id="P06151">
    <property type="interactions" value="1357"/>
</dbReference>
<dbReference type="IntAct" id="P06151">
    <property type="interactions" value="20"/>
</dbReference>
<dbReference type="MINT" id="P06151"/>
<dbReference type="STRING" id="10090.ENSMUSP00000148107"/>
<dbReference type="BindingDB" id="P06151"/>
<dbReference type="ChEMBL" id="CHEMBL4879426"/>
<dbReference type="MoonProt" id="P06151"/>
<dbReference type="GlyGen" id="P06151">
    <property type="glycosylation" value="1 site, 1 O-linked glycan (1 site)"/>
</dbReference>
<dbReference type="iPTMnet" id="P06151"/>
<dbReference type="MetOSite" id="P06151"/>
<dbReference type="PhosphoSitePlus" id="P06151"/>
<dbReference type="SwissPalm" id="P06151"/>
<dbReference type="REPRODUCTION-2DPAGE" id="P06151"/>
<dbReference type="jPOST" id="P06151"/>
<dbReference type="PaxDb" id="10090-ENSMUSP00000103267"/>
<dbReference type="PeptideAtlas" id="P06151"/>
<dbReference type="ProteomicsDB" id="265055"/>
<dbReference type="Pumba" id="P06151"/>
<dbReference type="TopDownProteomics" id="P06151"/>
<dbReference type="Antibodypedia" id="4200">
    <property type="antibodies" value="954 antibodies from 42 providers"/>
</dbReference>
<dbReference type="DNASU" id="16828"/>
<dbReference type="Ensembl" id="ENSMUST00000005051.6">
    <property type="protein sequence ID" value="ENSMUSP00000103267.3"/>
    <property type="gene ID" value="ENSMUSG00000063229.16"/>
</dbReference>
<dbReference type="Ensembl" id="ENSMUST00000048209.16">
    <property type="protein sequence ID" value="ENSMUSP00000036386.10"/>
    <property type="gene ID" value="ENSMUSG00000063229.16"/>
</dbReference>
<dbReference type="GeneID" id="16828"/>
<dbReference type="KEGG" id="mmu:16828"/>
<dbReference type="UCSC" id="uc009gzm.2">
    <property type="organism name" value="mouse"/>
</dbReference>
<dbReference type="AGR" id="MGI:96759"/>
<dbReference type="CTD" id="3939"/>
<dbReference type="MGI" id="MGI:96759">
    <property type="gene designation" value="Ldha"/>
</dbReference>
<dbReference type="VEuPathDB" id="HostDB:ENSMUSG00000063229"/>
<dbReference type="eggNOG" id="KOG1495">
    <property type="taxonomic scope" value="Eukaryota"/>
</dbReference>
<dbReference type="GeneTree" id="ENSGT00940000153201"/>
<dbReference type="HOGENOM" id="CLU_045401_0_2_1"/>
<dbReference type="InParanoid" id="P06151"/>
<dbReference type="OMA" id="EWDLDDY"/>
<dbReference type="OrthoDB" id="5405561at2759"/>
<dbReference type="PhylomeDB" id="P06151"/>
<dbReference type="Reactome" id="R-MMU-70268">
    <property type="pathway name" value="Pyruvate metabolism"/>
</dbReference>
<dbReference type="Reactome" id="R-MMU-9861718">
    <property type="pathway name" value="Regulation of pyruvate metabolism"/>
</dbReference>
<dbReference type="UniPathway" id="UPA00554">
    <property type="reaction ID" value="UER00611"/>
</dbReference>
<dbReference type="BioGRID-ORCS" id="16828">
    <property type="hits" value="24 hits in 75 CRISPR screens"/>
</dbReference>
<dbReference type="CD-CODE" id="CE726F99">
    <property type="entry name" value="Postsynaptic density"/>
</dbReference>
<dbReference type="ChiTaRS" id="Ldha">
    <property type="organism name" value="mouse"/>
</dbReference>
<dbReference type="PRO" id="PR:P06151"/>
<dbReference type="Proteomes" id="UP000000589">
    <property type="component" value="Chromosome 7"/>
</dbReference>
<dbReference type="RNAct" id="P06151">
    <property type="molecule type" value="protein"/>
</dbReference>
<dbReference type="Bgee" id="ENSMUSG00000063229">
    <property type="expression patterns" value="Expressed in otic placode and 272 other cell types or tissues"/>
</dbReference>
<dbReference type="ExpressionAtlas" id="P06151">
    <property type="expression patterns" value="baseline and differential"/>
</dbReference>
<dbReference type="GO" id="GO:0005829">
    <property type="term" value="C:cytosol"/>
    <property type="evidence" value="ECO:0000314"/>
    <property type="project" value="MGI"/>
</dbReference>
<dbReference type="GO" id="GO:0005739">
    <property type="term" value="C:mitochondrion"/>
    <property type="evidence" value="ECO:0007005"/>
    <property type="project" value="MGI"/>
</dbReference>
<dbReference type="GO" id="GO:1990204">
    <property type="term" value="C:oxidoreductase complex"/>
    <property type="evidence" value="ECO:0007669"/>
    <property type="project" value="Ensembl"/>
</dbReference>
<dbReference type="GO" id="GO:0035686">
    <property type="term" value="C:sperm fibrous sheath"/>
    <property type="evidence" value="ECO:0000314"/>
    <property type="project" value="MGI"/>
</dbReference>
<dbReference type="GO" id="GO:0042802">
    <property type="term" value="F:identical protein binding"/>
    <property type="evidence" value="ECO:0007669"/>
    <property type="project" value="Ensembl"/>
</dbReference>
<dbReference type="GO" id="GO:0004459">
    <property type="term" value="F:L-lactate dehydrogenase activity"/>
    <property type="evidence" value="ECO:0000314"/>
    <property type="project" value="MGI"/>
</dbReference>
<dbReference type="GO" id="GO:0004457">
    <property type="term" value="F:lactate dehydrogenase activity"/>
    <property type="evidence" value="ECO:0000315"/>
    <property type="project" value="MGI"/>
</dbReference>
<dbReference type="GO" id="GO:0019661">
    <property type="term" value="P:glucose catabolic process to lactate via pyruvate"/>
    <property type="evidence" value="ECO:0000315"/>
    <property type="project" value="MGI"/>
</dbReference>
<dbReference type="GO" id="GO:0019244">
    <property type="term" value="P:lactate biosynthetic process from pyruvate"/>
    <property type="evidence" value="ECO:0000305"/>
    <property type="project" value="MGI"/>
</dbReference>
<dbReference type="GO" id="GO:0042867">
    <property type="term" value="P:pyruvate catabolic process"/>
    <property type="evidence" value="ECO:0000314"/>
    <property type="project" value="MGI"/>
</dbReference>
<dbReference type="CDD" id="cd05293">
    <property type="entry name" value="LDH_1"/>
    <property type="match status" value="1"/>
</dbReference>
<dbReference type="FunFam" id="3.40.50.720:FF:000029">
    <property type="entry name" value="L-lactate dehydrogenase A chain"/>
    <property type="match status" value="1"/>
</dbReference>
<dbReference type="FunFam" id="3.90.110.10:FF:000003">
    <property type="entry name" value="L-lactate dehydrogenase A chain"/>
    <property type="match status" value="1"/>
</dbReference>
<dbReference type="Gene3D" id="3.90.110.10">
    <property type="entry name" value="Lactate dehydrogenase/glycoside hydrolase, family 4, C-terminal"/>
    <property type="match status" value="1"/>
</dbReference>
<dbReference type="Gene3D" id="3.40.50.720">
    <property type="entry name" value="NAD(P)-binding Rossmann-like Domain"/>
    <property type="match status" value="1"/>
</dbReference>
<dbReference type="HAMAP" id="MF_00488">
    <property type="entry name" value="Lactate_dehydrog"/>
    <property type="match status" value="1"/>
</dbReference>
<dbReference type="InterPro" id="IPR001557">
    <property type="entry name" value="L-lactate/malate_DH"/>
</dbReference>
<dbReference type="InterPro" id="IPR011304">
    <property type="entry name" value="L-lactate_DH"/>
</dbReference>
<dbReference type="InterPro" id="IPR018177">
    <property type="entry name" value="L-lactate_DH_AS"/>
</dbReference>
<dbReference type="InterPro" id="IPR022383">
    <property type="entry name" value="Lactate/malate_DH_C"/>
</dbReference>
<dbReference type="InterPro" id="IPR001236">
    <property type="entry name" value="Lactate/malate_DH_N"/>
</dbReference>
<dbReference type="InterPro" id="IPR015955">
    <property type="entry name" value="Lactate_DH/Glyco_Ohase_4_C"/>
</dbReference>
<dbReference type="InterPro" id="IPR036291">
    <property type="entry name" value="NAD(P)-bd_dom_sf"/>
</dbReference>
<dbReference type="NCBIfam" id="TIGR01771">
    <property type="entry name" value="L-LDH-NAD"/>
    <property type="match status" value="1"/>
</dbReference>
<dbReference type="NCBIfam" id="NF000824">
    <property type="entry name" value="PRK00066.1"/>
    <property type="match status" value="1"/>
</dbReference>
<dbReference type="PANTHER" id="PTHR43128">
    <property type="entry name" value="L-2-HYDROXYCARBOXYLATE DEHYDROGENASE (NAD(P)(+))"/>
    <property type="match status" value="1"/>
</dbReference>
<dbReference type="PANTHER" id="PTHR43128:SF10">
    <property type="entry name" value="L-LACTATE DEHYDROGENASE A CHAIN"/>
    <property type="match status" value="1"/>
</dbReference>
<dbReference type="Pfam" id="PF02866">
    <property type="entry name" value="Ldh_1_C"/>
    <property type="match status" value="1"/>
</dbReference>
<dbReference type="Pfam" id="PF00056">
    <property type="entry name" value="Ldh_1_N"/>
    <property type="match status" value="1"/>
</dbReference>
<dbReference type="PIRSF" id="PIRSF000102">
    <property type="entry name" value="Lac_mal_DH"/>
    <property type="match status" value="1"/>
</dbReference>
<dbReference type="PRINTS" id="PR00086">
    <property type="entry name" value="LLDHDRGNASE"/>
</dbReference>
<dbReference type="SUPFAM" id="SSF56327">
    <property type="entry name" value="LDH C-terminal domain-like"/>
    <property type="match status" value="1"/>
</dbReference>
<dbReference type="SUPFAM" id="SSF51735">
    <property type="entry name" value="NAD(P)-binding Rossmann-fold domains"/>
    <property type="match status" value="1"/>
</dbReference>
<dbReference type="PROSITE" id="PS00064">
    <property type="entry name" value="L_LDH"/>
    <property type="match status" value="1"/>
</dbReference>
<feature type="initiator methionine" description="Removed" evidence="7">
    <location>
        <position position="1"/>
    </location>
</feature>
<feature type="chain" id="PRO_0000168414" description="L-lactate dehydrogenase A chain">
    <location>
        <begin position="2"/>
        <end position="332"/>
    </location>
</feature>
<feature type="active site" description="Proton acceptor" evidence="1">
    <location>
        <position position="193"/>
    </location>
</feature>
<feature type="binding site" evidence="1">
    <location>
        <begin position="29"/>
        <end position="57"/>
    </location>
    <ligand>
        <name>NAD(+)</name>
        <dbReference type="ChEBI" id="CHEBI:57540"/>
    </ligand>
</feature>
<feature type="binding site" evidence="1">
    <location>
        <position position="99"/>
    </location>
    <ligand>
        <name>NAD(+)</name>
        <dbReference type="ChEBI" id="CHEBI:57540"/>
    </ligand>
</feature>
<feature type="binding site" evidence="1">
    <location>
        <position position="106"/>
    </location>
    <ligand>
        <name>substrate</name>
    </ligand>
</feature>
<feature type="binding site" evidence="1">
    <location>
        <position position="138"/>
    </location>
    <ligand>
        <name>NAD(+)</name>
        <dbReference type="ChEBI" id="CHEBI:57540"/>
    </ligand>
</feature>
<feature type="binding site" evidence="1">
    <location>
        <position position="138"/>
    </location>
    <ligand>
        <name>substrate</name>
    </ligand>
</feature>
<feature type="binding site" evidence="1">
    <location>
        <position position="169"/>
    </location>
    <ligand>
        <name>substrate</name>
    </ligand>
</feature>
<feature type="binding site" evidence="1">
    <location>
        <position position="248"/>
    </location>
    <ligand>
        <name>substrate</name>
    </ligand>
</feature>
<feature type="modified residue" description="N-acetylalanine" evidence="7">
    <location>
        <position position="2"/>
    </location>
</feature>
<feature type="modified residue" description="N6-acetyllysine; alternate" evidence="7">
    <location>
        <position position="5"/>
    </location>
</feature>
<feature type="modified residue" description="N6-succinyllysine; alternate" evidence="7">
    <location>
        <position position="5"/>
    </location>
</feature>
<feature type="modified residue" description="N6-acetyllysine" evidence="2">
    <location>
        <position position="14"/>
    </location>
</feature>
<feature type="modified residue" description="N6-acetyllysine; alternate" evidence="2">
    <location>
        <position position="57"/>
    </location>
</feature>
<feature type="modified residue" description="N6-acetyllysine" evidence="7">
    <location>
        <position position="81"/>
    </location>
</feature>
<feature type="modified residue" description="N6-acetyllysine; alternate" evidence="7">
    <location>
        <position position="118"/>
    </location>
</feature>
<feature type="modified residue" description="N6-succinyllysine; alternate" evidence="7">
    <location>
        <position position="118"/>
    </location>
</feature>
<feature type="modified residue" description="N6-acetyllysine" evidence="7">
    <location>
        <position position="126"/>
    </location>
</feature>
<feature type="modified residue" description="N6-acetyllysine" evidence="7">
    <location>
        <position position="224"/>
    </location>
</feature>
<feature type="modified residue" description="N6-acetyllysine" evidence="7">
    <location>
        <position position="232"/>
    </location>
</feature>
<feature type="modified residue" description="Phosphotyrosine" evidence="6">
    <location>
        <position position="239"/>
    </location>
</feature>
<feature type="modified residue" description="N6-acetyllysine" evidence="7">
    <location>
        <position position="243"/>
    </location>
</feature>
<feature type="modified residue" description="Phosphothreonine" evidence="3">
    <location>
        <position position="309"/>
    </location>
</feature>
<feature type="modified residue" description="N6-acetyllysine; alternate" evidence="7">
    <location>
        <position position="318"/>
    </location>
</feature>
<feature type="modified residue" description="N6-succinyllysine; alternate" evidence="7">
    <location>
        <position position="318"/>
    </location>
</feature>
<feature type="modified residue" description="Phosphothreonine" evidence="3">
    <location>
        <position position="322"/>
    </location>
</feature>
<feature type="cross-link" description="Glycyl lysine isopeptide (Lys-Gly) (interchain with G-Cter in SUMO2); alternate" evidence="2">
    <location>
        <position position="57"/>
    </location>
</feature>
<feature type="sequence conflict" description="In Ref. 2." evidence="5" ref="2">
    <original>N</original>
    <variation>I</variation>
    <location>
        <position position="11"/>
    </location>
</feature>
<sequence>MATLKDQLIVNLLKEEQAPQNKITVVGVGAVGMACAISILMKDLADELALVDVMEDKLKGEMMDLQHGSLFLKTPKIVSSKDYCVTANSKLVIITAGARQQEGESRLNLVQRNVNIFKFIIPNIVKYSPHCKLLIVSNPVDILTYVAWKISGFPKNRVIGSGCNLDSARFRYLMGERLGVHALSCHGWVLGEHGDSSVPVWSGVNVAGVSLKSLNPELGTDADKEQWKEVHKQVVDSAYEVIKLKGYTSWAIGLSVADLAESIMKNLRRVHPISTMIKGLYGINEDVFLSVPCILGQNGISDVVKVTLTPEEEARLKKSADTLWGIQKELQF</sequence>
<proteinExistence type="evidence at protein level"/>